<sequence length="385" mass="43379">MSSIPNINWNDPNNGKSNTSRQSQPQPQLPSNVSPPNSRAVPTSGSIGGPQYGSSQFSNEYSRNPNTIGGPPFPLQSNQRGYMPNTGYPVQQTAQQRSGDKLQQVHSQQQQQQQQPLYQQYPPQSVGYLAGDVYNPQHQEYVQMNQLPNQHYNLQQRQQAQGQQLKSQLNEQNAMMSASTQQYPVQDFTNPYPNAQNPAEQQQQQQPLRTQSQQWDGYQSQPLYSAAGNTIPSSIQQQIPPQNLSPSEQQQVKQQQPSPPEQGTKKKPGRKPKLRKLSESSSETPQVPKTASSSSSSPTAVNSGKPITKRSRMGCLTCRQRKKRCCETRPRCTECTRLRLNCTWPKPGTEHKNKPKDQKDDENTIEHAEFGRIKVLRGIVEYRSK</sequence>
<name>CZF1_CANAL</name>
<comment type="function">
    <text evidence="3 4 5 7 8 9 10 12 13 14 15 16">Transcriptional regulator of the switch between 2 heritable states, the white and opaque states. These 2 cell types differ in many characteristics, including cell structure, mating competence, and virulence. Each state is heritable for many generations, and switching between states occurs stochastically, at low frequency. Contributes to formation of the opaque state, but is not necessary for heritability of the opaque state. Plays a role in cell adhesion and pseudohyphal growth. Involved in acquisition of drug resistance and acts as a repressor of beta-glucan synthesis, thus negatively regulating cell wall integrity. Plays a role in adherence, invasion and damage to oral epithelial cells.</text>
</comment>
<comment type="subunit">
    <text evidence="4 15">Interacts with EFG1.</text>
</comment>
<comment type="subcellular location">
    <subcellularLocation>
        <location evidence="1">Nucleus</location>
    </subcellularLocation>
</comment>
<comment type="induction">
    <text evidence="6 11">Regulated in response to carbon source, temperature, growth phase, and physical environment. Expression is up-regulated by rapamycine, and thus is under the regulation of the TOR pathway. Binds its own promoter and is also under the control of EFG1.</text>
</comment>
<organism>
    <name type="scientific">Candida albicans (strain SC5314 / ATCC MYA-2876)</name>
    <name type="common">Yeast</name>
    <dbReference type="NCBI Taxonomy" id="237561"/>
    <lineage>
        <taxon>Eukaryota</taxon>
        <taxon>Fungi</taxon>
        <taxon>Dikarya</taxon>
        <taxon>Ascomycota</taxon>
        <taxon>Saccharomycotina</taxon>
        <taxon>Pichiomycetes</taxon>
        <taxon>Debaryomycetaceae</taxon>
        <taxon>Candida/Lodderomyces clade</taxon>
        <taxon>Candida</taxon>
    </lineage>
</organism>
<reference key="1">
    <citation type="journal article" date="2004" name="Proc. Natl. Acad. Sci. U.S.A.">
        <title>The diploid genome sequence of Candida albicans.</title>
        <authorList>
            <person name="Jones T."/>
            <person name="Federspiel N.A."/>
            <person name="Chibana H."/>
            <person name="Dungan J."/>
            <person name="Kalman S."/>
            <person name="Magee B.B."/>
            <person name="Newport G."/>
            <person name="Thorstenson Y.R."/>
            <person name="Agabian N."/>
            <person name="Magee P.T."/>
            <person name="Davis R.W."/>
            <person name="Scherer S."/>
        </authorList>
    </citation>
    <scope>NUCLEOTIDE SEQUENCE [LARGE SCALE GENOMIC DNA]</scope>
    <source>
        <strain>SC5314 / ATCC MYA-2876</strain>
    </source>
</reference>
<reference key="2">
    <citation type="journal article" date="2007" name="Genome Biol.">
        <title>Assembly of the Candida albicans genome into sixteen supercontigs aligned on the eight chromosomes.</title>
        <authorList>
            <person name="van het Hoog M."/>
            <person name="Rast T.J."/>
            <person name="Martchenko M."/>
            <person name="Grindle S."/>
            <person name="Dignard D."/>
            <person name="Hogues H."/>
            <person name="Cuomo C."/>
            <person name="Berriman M."/>
            <person name="Scherer S."/>
            <person name="Magee B.B."/>
            <person name="Whiteway M."/>
            <person name="Chibana H."/>
            <person name="Nantel A."/>
            <person name="Magee P.T."/>
        </authorList>
    </citation>
    <scope>GENOME REANNOTATION</scope>
    <source>
        <strain>SC5314 / ATCC MYA-2876</strain>
    </source>
</reference>
<reference key="3">
    <citation type="journal article" date="2013" name="Genome Biol.">
        <title>Assembly of a phased diploid Candida albicans genome facilitates allele-specific measurements and provides a simple model for repeat and indel structure.</title>
        <authorList>
            <person name="Muzzey D."/>
            <person name="Schwartz K."/>
            <person name="Weissman J.S."/>
            <person name="Sherlock G."/>
        </authorList>
    </citation>
    <scope>NUCLEOTIDE SEQUENCE [LARGE SCALE GENOMIC DNA]</scope>
    <scope>GENOME REANNOTATION</scope>
    <source>
        <strain>SC5314 / ATCC MYA-2876</strain>
    </source>
</reference>
<reference key="4">
    <citation type="journal article" date="1992" name="Proc. Natl. Acad. Sci. U.S.A.">
        <title>Dominant negative selection of heterologous genes: isolation of Candida albicans genes that interfere with Saccharomyces cerevisiae mating factor-induced cell cycle arrest.</title>
        <authorList>
            <person name="Whiteway M."/>
            <person name="Dignard D."/>
            <person name="Thomas D.Y."/>
        </authorList>
    </citation>
    <scope>FUNCTION</scope>
</reference>
<reference key="5">
    <citation type="journal article" date="1997" name="Fungal Genet. Biol.">
        <title>Evolution of a fungal regulatory gene family: the Zn(II)2Cys6 binuclear cluster DNA binding motif.</title>
        <authorList>
            <person name="Todd R.B."/>
            <person name="Andrianopoulos A."/>
        </authorList>
    </citation>
    <scope>DNA-BINDING</scope>
</reference>
<reference key="6">
    <citation type="journal article" date="1999" name="Mol. Microbiol.">
        <title>Filamentous growth of Candida albicans in response to physical environmental cues and its regulation by the unique CZF1 gene.</title>
        <authorList>
            <person name="Brown D.H. Jr."/>
            <person name="Giusani A.D."/>
            <person name="Chen X."/>
            <person name="Kumamoto C.A."/>
        </authorList>
    </citation>
    <scope>FUNCTION</scope>
</reference>
<reference key="7">
    <citation type="journal article" date="2002" name="Genetics">
        <title>Invasive filamentous growth of Candida albicans is promoted by Czf1p-dependent relief of Efg1p-mediated repression.</title>
        <authorList>
            <person name="Giusani A.D."/>
            <person name="Vinces M."/>
            <person name="Kumamoto C.A."/>
        </authorList>
    </citation>
    <scope>FUNCTION</scope>
    <scope>INTERACTION WITH EFG1</scope>
</reference>
<reference key="8">
    <citation type="journal article" date="2005" name="Comp. Funct. Genomics">
        <title>In silico analysis for transcription factors with Zn(II)(2)C(6) binuclear cluster DNA-binding domains in Candida albicans.</title>
        <authorList>
            <person name="Maicas S."/>
            <person name="Moreno I."/>
            <person name="Nieto A."/>
            <person name="Gomez M."/>
            <person name="Sentandreu R."/>
            <person name="Valentin E."/>
        </authorList>
    </citation>
    <scope>DNA-BINDING</scope>
</reference>
<reference key="9">
    <citation type="journal article" date="2006" name="Eukaryot. Cell">
        <title>Expression of the Candida albicans morphogenesis regulator gene CZF1 and its regulation by Efg1p and Czf1p.</title>
        <authorList>
            <person name="Vinces M.D."/>
            <person name="Haas C."/>
            <person name="Kumamoto C.A."/>
        </authorList>
    </citation>
    <scope>INDUCTION</scope>
</reference>
<reference key="10">
    <citation type="journal article" date="2007" name="Microbiology">
        <title>The morphogenetic regulator Czf1p is a DNA-binding protein that regulates white opaque switching in Candida albicans.</title>
        <authorList>
            <person name="Vinces M.D."/>
            <person name="Kumamoto C.A."/>
        </authorList>
    </citation>
    <scope>FUNCTION</scope>
    <scope>DNA-BINDING</scope>
</reference>
<reference key="11">
    <citation type="journal article" date="2007" name="PLoS Biol.">
        <title>Interlocking transcriptional feedback loops control white-opaque switching in Candida albicans.</title>
        <authorList>
            <person name="Zordan R.E."/>
            <person name="Miller M.G."/>
            <person name="Galgoczy D.J."/>
            <person name="Tuch B.B."/>
            <person name="Johnson A.D."/>
        </authorList>
    </citation>
    <scope>FUNCTION</scope>
</reference>
<reference key="12">
    <citation type="journal article" date="2008" name="PLoS Pathog.">
        <title>Environmental induction of white-opaque switching in Candida albicans.</title>
        <authorList>
            <person name="Ramirez-Zavala B."/>
            <person name="Reuss O."/>
            <person name="Park Y.N."/>
            <person name="Ohlsen K."/>
            <person name="Morschhauser J."/>
        </authorList>
    </citation>
    <scope>FUNCTION</scope>
</reference>
<reference key="13">
    <citation type="journal article" date="2008" name="Mol. Biol. Cell">
        <title>Activation of Rac1 by the guanine nucleotide exchange factor Dck1 is required for invasive filamentous growth in the pathogen Candida albicans.</title>
        <authorList>
            <person name="Hope H."/>
            <person name="Bogliolo S."/>
            <person name="Arkowitz R.A."/>
            <person name="Bassilana M."/>
        </authorList>
    </citation>
    <scope>FUNCTION</scope>
</reference>
<reference key="14">
    <citation type="journal article" date="2009" name="PLoS Pathog.">
        <title>The protein kinase Tor1 regulates adhesin gene expression in Candida albicans.</title>
        <authorList>
            <person name="Bastidas R.J."/>
            <person name="Heitman J."/>
            <person name="Cardenas M.E."/>
        </authorList>
    </citation>
    <scope>INDUCTION</scope>
</reference>
<reference key="15">
    <citation type="journal article" date="2010" name="Mol. Microbiol.">
        <title>Temporal anatomy of an epigenetic switch in cell programming: the white-opaque transition of C. albicans.</title>
        <authorList>
            <person name="Lohse M.B."/>
            <person name="Johnson A.D."/>
        </authorList>
    </citation>
    <scope>FUNCTION</scope>
</reference>
<reference key="16">
    <citation type="journal article" date="2011" name="PLoS ONE">
        <title>From attachment to damage: defined genes of Candida albicans mediate adhesion, invasion and damage during interaction with oral epithelial cells.</title>
        <authorList>
            <person name="Wachtler B."/>
            <person name="Wilson D."/>
            <person name="Haedicke K."/>
            <person name="Dalle F."/>
            <person name="Hube B."/>
        </authorList>
    </citation>
    <scope>FUNCTION</scope>
</reference>
<reference key="17">
    <citation type="journal article" date="2012" name="BMC Genomics">
        <title>RNA sequencing revealed novel actors of the acquisition of drug resistance in Candida albicans.</title>
        <authorList>
            <person name="Dhamgaye S."/>
            <person name="Bernard M."/>
            <person name="Lelandais G."/>
            <person name="Sismeiro O."/>
            <person name="Lemoine S."/>
            <person name="Coppee J.Y."/>
            <person name="Le Crom S."/>
            <person name="Prasad R."/>
            <person name="Devaux F."/>
        </authorList>
    </citation>
    <scope>FUNCTION</scope>
</reference>
<reference key="18">
    <citation type="journal article" date="2012" name="PLoS ONE">
        <title>Functional importance of the DNA binding activity of Candida albicans Czf1p.</title>
        <authorList>
            <person name="Petrovska I."/>
            <person name="Kumamoto C.A."/>
        </authorList>
    </citation>
    <scope>FUNCTION</scope>
    <scope>DNA-BINDING</scope>
    <scope>INTERACTION WITH EFG1</scope>
    <scope>MUTAGENESIS OF ARG-321 AND LYS-322</scope>
</reference>
<reference key="19">
    <citation type="journal article" date="2012" name="PLoS Pathog.">
        <title>Portrait of Candida albicans adherence regulators.</title>
        <authorList>
            <person name="Finkel J.S."/>
            <person name="Xu W."/>
            <person name="Huang D."/>
            <person name="Hill E.M."/>
            <person name="Desai J.V."/>
            <person name="Woolford C.A."/>
            <person name="Nett J.E."/>
            <person name="Taff H."/>
            <person name="Norice C.T."/>
            <person name="Andes D.R."/>
            <person name="Lanni F."/>
            <person name="Mitchell A.P."/>
        </authorList>
    </citation>
    <scope>FUNCTION</scope>
</reference>
<gene>
    <name type="primary">CZF1</name>
    <name type="synonym">ZNF1</name>
    <name type="ordered locus">CAALFM_C406820CA</name>
    <name type="ORF">CaO19.10639</name>
    <name type="ORF">CaO19.3127</name>
</gene>
<evidence type="ECO:0000255" key="1">
    <source>
        <dbReference type="PROSITE-ProRule" id="PRU00227"/>
    </source>
</evidence>
<evidence type="ECO:0000256" key="2">
    <source>
        <dbReference type="SAM" id="MobiDB-lite"/>
    </source>
</evidence>
<evidence type="ECO:0000269" key="3">
    <source>
    </source>
</evidence>
<evidence type="ECO:0000269" key="4">
    <source>
    </source>
</evidence>
<evidence type="ECO:0000269" key="5">
    <source>
    </source>
</evidence>
<evidence type="ECO:0000269" key="6">
    <source>
    </source>
</evidence>
<evidence type="ECO:0000269" key="7">
    <source>
    </source>
</evidence>
<evidence type="ECO:0000269" key="8">
    <source>
    </source>
</evidence>
<evidence type="ECO:0000269" key="9">
    <source>
    </source>
</evidence>
<evidence type="ECO:0000269" key="10">
    <source>
    </source>
</evidence>
<evidence type="ECO:0000269" key="11">
    <source>
    </source>
</evidence>
<evidence type="ECO:0000269" key="12">
    <source>
    </source>
</evidence>
<evidence type="ECO:0000269" key="13">
    <source>
    </source>
</evidence>
<evidence type="ECO:0000269" key="14">
    <source>
    </source>
</evidence>
<evidence type="ECO:0000269" key="15">
    <source>
    </source>
</evidence>
<evidence type="ECO:0000269" key="16">
    <source>
    </source>
</evidence>
<accession>Q5A0W9</accession>
<accession>A0A1D8PMN7</accession>
<keyword id="KW-0238">DNA-binding</keyword>
<keyword id="KW-0479">Metal-binding</keyword>
<keyword id="KW-0539">Nucleus</keyword>
<keyword id="KW-1185">Reference proteome</keyword>
<keyword id="KW-0804">Transcription</keyword>
<keyword id="KW-0805">Transcription regulation</keyword>
<keyword id="KW-0843">Virulence</keyword>
<keyword id="KW-0862">Zinc</keyword>
<feature type="chain" id="PRO_0000420154" description="Zinc cluster transcription factor CZF1">
    <location>
        <begin position="1"/>
        <end position="385"/>
    </location>
</feature>
<feature type="DNA-binding region" description="Zn(2)-C6 fungal-type" evidence="1">
    <location>
        <begin position="315"/>
        <end position="342"/>
    </location>
</feature>
<feature type="region of interest" description="Disordered" evidence="2">
    <location>
        <begin position="1"/>
        <end position="117"/>
    </location>
</feature>
<feature type="region of interest" description="Disordered" evidence="2">
    <location>
        <begin position="154"/>
        <end position="216"/>
    </location>
</feature>
<feature type="region of interest" description="Disordered" evidence="2">
    <location>
        <begin position="233"/>
        <end position="308"/>
    </location>
</feature>
<feature type="region of interest" description="Disordered" evidence="2">
    <location>
        <begin position="345"/>
        <end position="364"/>
    </location>
</feature>
<feature type="compositionally biased region" description="Polar residues" evidence="2">
    <location>
        <begin position="1"/>
        <end position="19"/>
    </location>
</feature>
<feature type="compositionally biased region" description="Low complexity" evidence="2">
    <location>
        <begin position="20"/>
        <end position="38"/>
    </location>
</feature>
<feature type="compositionally biased region" description="Polar residues" evidence="2">
    <location>
        <begin position="52"/>
        <end position="67"/>
    </location>
</feature>
<feature type="compositionally biased region" description="Polar residues" evidence="2">
    <location>
        <begin position="88"/>
        <end position="97"/>
    </location>
</feature>
<feature type="compositionally biased region" description="Low complexity" evidence="2">
    <location>
        <begin position="102"/>
        <end position="117"/>
    </location>
</feature>
<feature type="compositionally biased region" description="Low complexity" evidence="2">
    <location>
        <begin position="154"/>
        <end position="169"/>
    </location>
</feature>
<feature type="compositionally biased region" description="Polar residues" evidence="2">
    <location>
        <begin position="170"/>
        <end position="200"/>
    </location>
</feature>
<feature type="compositionally biased region" description="Low complexity" evidence="2">
    <location>
        <begin position="201"/>
        <end position="214"/>
    </location>
</feature>
<feature type="compositionally biased region" description="Low complexity" evidence="2">
    <location>
        <begin position="233"/>
        <end position="256"/>
    </location>
</feature>
<feature type="compositionally biased region" description="Basic residues" evidence="2">
    <location>
        <begin position="265"/>
        <end position="275"/>
    </location>
</feature>
<feature type="compositionally biased region" description="Polar residues" evidence="2">
    <location>
        <begin position="279"/>
        <end position="291"/>
    </location>
</feature>
<feature type="compositionally biased region" description="Basic and acidic residues" evidence="2">
    <location>
        <begin position="348"/>
        <end position="364"/>
    </location>
</feature>
<feature type="mutagenesis site" description="Impairs DNA-binding." evidence="15">
    <original>R</original>
    <variation>A</variation>
    <location>
        <position position="321"/>
    </location>
</feature>
<feature type="mutagenesis site" description="Decreases DNA-binding." evidence="15">
    <original>K</original>
    <variation>A</variation>
    <location>
        <position position="322"/>
    </location>
</feature>
<dbReference type="EMBL" id="CP017626">
    <property type="protein sequence ID" value="AOW29403.1"/>
    <property type="molecule type" value="Genomic_DNA"/>
</dbReference>
<dbReference type="RefSeq" id="XP_715436.1">
    <property type="nucleotide sequence ID" value="XM_710343.2"/>
</dbReference>
<dbReference type="SMR" id="Q5A0W9"/>
<dbReference type="BioGRID" id="1225956">
    <property type="interactions" value="3"/>
</dbReference>
<dbReference type="STRING" id="237561.Q5A0W9"/>
<dbReference type="EnsemblFungi" id="C4_06820C_A-T">
    <property type="protein sequence ID" value="C4_06820C_A-T-p1"/>
    <property type="gene ID" value="C4_06820C_A"/>
</dbReference>
<dbReference type="GeneID" id="3642915"/>
<dbReference type="KEGG" id="cal:CAALFM_C406820CA"/>
<dbReference type="CGD" id="CAL0000193101">
    <property type="gene designation" value="CZF1"/>
</dbReference>
<dbReference type="VEuPathDB" id="FungiDB:C4_06820C_A"/>
<dbReference type="eggNOG" id="ENOG502RK5N">
    <property type="taxonomic scope" value="Eukaryota"/>
</dbReference>
<dbReference type="HOGENOM" id="CLU_705961_0_0_1"/>
<dbReference type="InParanoid" id="Q5A0W9"/>
<dbReference type="OMA" id="LRLNCTW"/>
<dbReference type="OrthoDB" id="5418899at2759"/>
<dbReference type="CD-CODE" id="1E246C77">
    <property type="entry name" value="Transcriptional condensate"/>
</dbReference>
<dbReference type="PRO" id="PR:Q5A0W9"/>
<dbReference type="Proteomes" id="UP000000559">
    <property type="component" value="Chromosome 4"/>
</dbReference>
<dbReference type="GO" id="GO:0005634">
    <property type="term" value="C:nucleus"/>
    <property type="evidence" value="ECO:0007669"/>
    <property type="project" value="UniProtKB-SubCell"/>
</dbReference>
<dbReference type="GO" id="GO:0003677">
    <property type="term" value="F:DNA binding"/>
    <property type="evidence" value="ECO:0000314"/>
    <property type="project" value="CGD"/>
</dbReference>
<dbReference type="GO" id="GO:0000981">
    <property type="term" value="F:DNA-binding transcription factor activity, RNA polymerase II-specific"/>
    <property type="evidence" value="ECO:0007669"/>
    <property type="project" value="InterPro"/>
</dbReference>
<dbReference type="GO" id="GO:0008270">
    <property type="term" value="F:zinc ion binding"/>
    <property type="evidence" value="ECO:0007669"/>
    <property type="project" value="InterPro"/>
</dbReference>
<dbReference type="GO" id="GO:0044403">
    <property type="term" value="P:biological process involved in symbiotic interaction"/>
    <property type="evidence" value="ECO:0000315"/>
    <property type="project" value="CGD"/>
</dbReference>
<dbReference type="GO" id="GO:0009267">
    <property type="term" value="P:cellular response to starvation"/>
    <property type="evidence" value="ECO:0000315"/>
    <property type="project" value="CGD"/>
</dbReference>
<dbReference type="GO" id="GO:0030447">
    <property type="term" value="P:filamentous growth"/>
    <property type="evidence" value="ECO:0000315"/>
    <property type="project" value="CGD"/>
</dbReference>
<dbReference type="GO" id="GO:0036180">
    <property type="term" value="P:filamentous growth of a population of unicellular organisms in response to biotic stimulus"/>
    <property type="evidence" value="ECO:0000315"/>
    <property type="project" value="CGD"/>
</dbReference>
<dbReference type="GO" id="GO:0036170">
    <property type="term" value="P:filamentous growth of a population of unicellular organisms in response to starvation"/>
    <property type="evidence" value="ECO:0000315"/>
    <property type="project" value="CGD"/>
</dbReference>
<dbReference type="GO" id="GO:0007618">
    <property type="term" value="P:mating"/>
    <property type="evidence" value="ECO:0000315"/>
    <property type="project" value="CGD"/>
</dbReference>
<dbReference type="GO" id="GO:0036166">
    <property type="term" value="P:phenotypic switching"/>
    <property type="evidence" value="ECO:0000315"/>
    <property type="project" value="CGD"/>
</dbReference>
<dbReference type="GO" id="GO:1900189">
    <property type="term" value="P:positive regulation of cell adhesion involved in single-species biofilm formation"/>
    <property type="evidence" value="ECO:0000315"/>
    <property type="project" value="CGD"/>
</dbReference>
<dbReference type="GO" id="GO:0010811">
    <property type="term" value="P:positive regulation of cell-substrate adhesion"/>
    <property type="evidence" value="ECO:0000315"/>
    <property type="project" value="CGD"/>
</dbReference>
<dbReference type="GO" id="GO:1900241">
    <property type="term" value="P:positive regulation of phenotypic switching"/>
    <property type="evidence" value="ECO:0000315"/>
    <property type="project" value="CGD"/>
</dbReference>
<dbReference type="GO" id="GO:0009372">
    <property type="term" value="P:quorum sensing"/>
    <property type="evidence" value="ECO:0000315"/>
    <property type="project" value="CGD"/>
</dbReference>
<dbReference type="GO" id="GO:1900443">
    <property type="term" value="P:regulation of filamentous growth of a population of unicellular organisms in response to biotic stimulus"/>
    <property type="evidence" value="ECO:0000315"/>
    <property type="project" value="CGD"/>
</dbReference>
<dbReference type="GO" id="GO:1900239">
    <property type="term" value="P:regulation of phenotypic switching"/>
    <property type="evidence" value="ECO:0000315"/>
    <property type="project" value="CGD"/>
</dbReference>
<dbReference type="GO" id="GO:1900231">
    <property type="term" value="P:regulation of single-species biofilm formation on inanimate substrate"/>
    <property type="evidence" value="ECO:0000315"/>
    <property type="project" value="CGD"/>
</dbReference>
<dbReference type="GO" id="GO:0006357">
    <property type="term" value="P:regulation of transcription by RNA polymerase II"/>
    <property type="evidence" value="ECO:0000315"/>
    <property type="project" value="CGD"/>
</dbReference>
<dbReference type="GO" id="GO:0044011">
    <property type="term" value="P:single-species biofilm formation on inanimate substrate"/>
    <property type="evidence" value="ECO:0000315"/>
    <property type="project" value="CGD"/>
</dbReference>
<dbReference type="CDD" id="cd00067">
    <property type="entry name" value="GAL4"/>
    <property type="match status" value="1"/>
</dbReference>
<dbReference type="FunFam" id="4.10.240.10:FF:000085">
    <property type="entry name" value="Zinc cluster transcription factor CZF1"/>
    <property type="match status" value="1"/>
</dbReference>
<dbReference type="Gene3D" id="4.10.240.10">
    <property type="entry name" value="Zn(2)-C6 fungal-type DNA-binding domain"/>
    <property type="match status" value="1"/>
</dbReference>
<dbReference type="InterPro" id="IPR036864">
    <property type="entry name" value="Zn2-C6_fun-type_DNA-bd_sf"/>
</dbReference>
<dbReference type="InterPro" id="IPR001138">
    <property type="entry name" value="Zn2Cys6_DnaBD"/>
</dbReference>
<dbReference type="Pfam" id="PF00172">
    <property type="entry name" value="Zn_clus"/>
    <property type="match status" value="1"/>
</dbReference>
<dbReference type="SMART" id="SM00066">
    <property type="entry name" value="GAL4"/>
    <property type="match status" value="1"/>
</dbReference>
<dbReference type="SUPFAM" id="SSF57701">
    <property type="entry name" value="Zn2/Cys6 DNA-binding domain"/>
    <property type="match status" value="1"/>
</dbReference>
<dbReference type="PROSITE" id="PS00463">
    <property type="entry name" value="ZN2_CY6_FUNGAL_1"/>
    <property type="match status" value="1"/>
</dbReference>
<dbReference type="PROSITE" id="PS50048">
    <property type="entry name" value="ZN2_CY6_FUNGAL_2"/>
    <property type="match status" value="1"/>
</dbReference>
<protein>
    <recommendedName>
        <fullName>Zinc cluster transcription factor CZF1</fullName>
    </recommendedName>
</protein>
<proteinExistence type="evidence at protein level"/>